<reference key="1">
    <citation type="journal article" date="1994" name="J. Bacteriol.">
        <title>Genetic analysis of the O-specific lipopolysaccharide biosynthesis region (rfb) of Escherichia coli K-12 W3110: identification of genes that confer group 6 specificity to Shigella flexneri serotypes Y and 4a.</title>
        <authorList>
            <person name="Yao Z."/>
            <person name="Valvano M.A."/>
        </authorList>
    </citation>
    <scope>NUCLEOTIDE SEQUENCE [GENOMIC DNA]</scope>
    <source>
        <strain>K12 / W3110 / ATCC 27325 / DSM 5911</strain>
    </source>
</reference>
<reference key="2">
    <citation type="journal article" date="1994" name="J. Bacteriol.">
        <title>Structure of the O antigen of Escherichia coli K-12 and the sequence of its rfb gene cluster.</title>
        <authorList>
            <person name="Stevenson G."/>
            <person name="Neal B."/>
            <person name="Liu D."/>
            <person name="Hobbs M."/>
            <person name="Packer N.H."/>
            <person name="Batley M."/>
            <person name="Redmond J.W."/>
            <person name="Lindquist L."/>
            <person name="Reeves P.R."/>
        </authorList>
    </citation>
    <scope>NUCLEOTIDE SEQUENCE [GENOMIC DNA]</scope>
    <source>
        <strain>K12 / WG1</strain>
    </source>
</reference>
<reference key="3">
    <citation type="journal article" date="1996" name="DNA Res.">
        <title>A 460-kb DNA sequence of the Escherichia coli K-12 genome corresponding to the 40.1-50.0 min region on the linkage map.</title>
        <authorList>
            <person name="Itoh T."/>
            <person name="Aiba H."/>
            <person name="Baba T."/>
            <person name="Fujita K."/>
            <person name="Hayashi K."/>
            <person name="Inada T."/>
            <person name="Isono K."/>
            <person name="Kasai H."/>
            <person name="Kimura S."/>
            <person name="Kitakawa M."/>
            <person name="Kitagawa M."/>
            <person name="Makino K."/>
            <person name="Miki T."/>
            <person name="Mizobuchi K."/>
            <person name="Mori H."/>
            <person name="Mori T."/>
            <person name="Motomura K."/>
            <person name="Nakade S."/>
            <person name="Nakamura Y."/>
            <person name="Nashimoto H."/>
            <person name="Nishio Y."/>
            <person name="Oshima T."/>
            <person name="Saito N."/>
            <person name="Sampei G."/>
            <person name="Seki Y."/>
            <person name="Sivasundaram S."/>
            <person name="Tagami H."/>
            <person name="Takeda J."/>
            <person name="Takemoto K."/>
            <person name="Wada C."/>
            <person name="Yamamoto Y."/>
            <person name="Horiuchi T."/>
        </authorList>
    </citation>
    <scope>NUCLEOTIDE SEQUENCE [LARGE SCALE GENOMIC DNA]</scope>
    <source>
        <strain>K12 / W3110 / ATCC 27325 / DSM 5911</strain>
    </source>
</reference>
<reference key="4">
    <citation type="journal article" date="1997" name="Science">
        <title>The complete genome sequence of Escherichia coli K-12.</title>
        <authorList>
            <person name="Blattner F.R."/>
            <person name="Plunkett G. III"/>
            <person name="Bloch C.A."/>
            <person name="Perna N.T."/>
            <person name="Burland V."/>
            <person name="Riley M."/>
            <person name="Collado-Vides J."/>
            <person name="Glasner J.D."/>
            <person name="Rode C.K."/>
            <person name="Mayhew G.F."/>
            <person name="Gregor J."/>
            <person name="Davis N.W."/>
            <person name="Kirkpatrick H.A."/>
            <person name="Goeden M.A."/>
            <person name="Rose D.J."/>
            <person name="Mau B."/>
            <person name="Shao Y."/>
        </authorList>
    </citation>
    <scope>NUCLEOTIDE SEQUENCE [LARGE SCALE GENOMIC DNA]</scope>
    <source>
        <strain>K12 / MG1655 / ATCC 47076</strain>
    </source>
</reference>
<reference key="5">
    <citation type="journal article" date="2006" name="Mol. Syst. Biol.">
        <title>Highly accurate genome sequences of Escherichia coli K-12 strains MG1655 and W3110.</title>
        <authorList>
            <person name="Hayashi K."/>
            <person name="Morooka N."/>
            <person name="Yamamoto Y."/>
            <person name="Fujita K."/>
            <person name="Isono K."/>
            <person name="Choi S."/>
            <person name="Ohtsubo E."/>
            <person name="Baba T."/>
            <person name="Wanner B.L."/>
            <person name="Mori H."/>
            <person name="Horiuchi T."/>
        </authorList>
    </citation>
    <scope>NUCLEOTIDE SEQUENCE [LARGE SCALE GENOMIC DNA]</scope>
    <source>
        <strain>K12 / W3110 / ATCC 27325 / DSM 5911</strain>
    </source>
</reference>
<comment type="function">
    <text evidence="1">Catalyzes the epimerization of the C3' and C5'positions of dTDP-6-deoxy-D-xylo-4-hexulose, forming dTDP-6-deoxy-L-lyxo-4-hexulose.</text>
</comment>
<comment type="catalytic activity">
    <reaction evidence="1">
        <text>dTDP-4-dehydro-6-deoxy-alpha-D-glucose = dTDP-4-dehydro-beta-L-rhamnose</text>
        <dbReference type="Rhea" id="RHEA:16969"/>
        <dbReference type="ChEBI" id="CHEBI:57649"/>
        <dbReference type="ChEBI" id="CHEBI:62830"/>
        <dbReference type="EC" id="5.1.3.13"/>
    </reaction>
</comment>
<comment type="pathway">
    <text evidence="1">Carbohydrate biosynthesis; dTDP-L-rhamnose biosynthesis.</text>
</comment>
<comment type="pathway">
    <text evidence="1">Bacterial outer membrane biogenesis; LPS O-antigen biosynthesis.</text>
</comment>
<comment type="subunit">
    <text evidence="1">Homodimer.</text>
</comment>
<comment type="interaction">
    <interactant intactId="EBI-557071">
        <id>P37745</id>
    </interactant>
    <interactant intactId="EBI-543750">
        <id>P0A6F5</id>
        <label>groEL</label>
    </interactant>
    <organismsDiffer>false</organismsDiffer>
    <experiments>3</experiments>
</comment>
<comment type="similarity">
    <text evidence="4">Belongs to the dTDP-4-dehydrorhamnose 3,5-epimerase family.</text>
</comment>
<sequence length="185" mass="21270">MNVIRTEIEDVLILEPRVFGDDRGFFYESFNQSAFEHILGYPVSFVQDNHSRSSKNVLRGLHFQRGEYAQDKLVRCTHGAVFDVAVDIRPNSVSFGKWVGVLLSADNKQQLWIPKGFAHGFLVLSDIAEFQYKTTNYYHPESDCGICWNDERIAIDWPQTSGLILSPKDERLFTLDELIRLKLIA</sequence>
<dbReference type="EC" id="5.1.3.13" evidence="1"/>
<dbReference type="EMBL" id="U03041">
    <property type="protein sequence ID" value="AAC31630.1"/>
    <property type="molecule type" value="Genomic_DNA"/>
</dbReference>
<dbReference type="EMBL" id="U09876">
    <property type="protein sequence ID" value="AAB88401.1"/>
    <property type="molecule type" value="Genomic_DNA"/>
</dbReference>
<dbReference type="EMBL" id="U00096">
    <property type="protein sequence ID" value="AAC75099.1"/>
    <property type="molecule type" value="Genomic_DNA"/>
</dbReference>
<dbReference type="EMBL" id="AP009048">
    <property type="protein sequence ID" value="BAA15880.1"/>
    <property type="molecule type" value="Genomic_DNA"/>
</dbReference>
<dbReference type="PIR" id="I69651">
    <property type="entry name" value="I69651"/>
</dbReference>
<dbReference type="RefSeq" id="NP_416542.1">
    <property type="nucleotide sequence ID" value="NC_000913.3"/>
</dbReference>
<dbReference type="RefSeq" id="WP_001100981.1">
    <property type="nucleotide sequence ID" value="NZ_LN832404.1"/>
</dbReference>
<dbReference type="SMR" id="P37745"/>
<dbReference type="BioGRID" id="4261258">
    <property type="interactions" value="246"/>
</dbReference>
<dbReference type="DIP" id="DIP-10681N"/>
<dbReference type="FunCoup" id="P37745">
    <property type="interactions" value="470"/>
</dbReference>
<dbReference type="IntAct" id="P37745">
    <property type="interactions" value="3"/>
</dbReference>
<dbReference type="STRING" id="511145.b2038"/>
<dbReference type="jPOST" id="P37745"/>
<dbReference type="PaxDb" id="511145-b2038"/>
<dbReference type="EnsemblBacteria" id="AAC75099">
    <property type="protein sequence ID" value="AAC75099"/>
    <property type="gene ID" value="b2038"/>
</dbReference>
<dbReference type="GeneID" id="947482"/>
<dbReference type="KEGG" id="ecj:JW2023"/>
<dbReference type="KEGG" id="eco:b2038"/>
<dbReference type="KEGG" id="ecoc:C3026_11480"/>
<dbReference type="PATRIC" id="fig|1411691.4.peg.213"/>
<dbReference type="EchoBASE" id="EB1922"/>
<dbReference type="eggNOG" id="COG1898">
    <property type="taxonomic scope" value="Bacteria"/>
</dbReference>
<dbReference type="HOGENOM" id="CLU_090940_1_1_6"/>
<dbReference type="InParanoid" id="P37745"/>
<dbReference type="OMA" id="AHVTYKC"/>
<dbReference type="OrthoDB" id="9800680at2"/>
<dbReference type="PhylomeDB" id="P37745"/>
<dbReference type="BioCyc" id="EcoCyc:DTDPDEHYDRHAMEPIM-MONOMER"/>
<dbReference type="BioCyc" id="MetaCyc:DTDPDEHYDRHAMEPIM-MONOMER"/>
<dbReference type="UniPathway" id="UPA00124"/>
<dbReference type="UniPathway" id="UPA00281"/>
<dbReference type="PRO" id="PR:P37745"/>
<dbReference type="Proteomes" id="UP000000625">
    <property type="component" value="Chromosome"/>
</dbReference>
<dbReference type="GO" id="GO:0005829">
    <property type="term" value="C:cytosol"/>
    <property type="evidence" value="ECO:0000314"/>
    <property type="project" value="EcoCyc"/>
</dbReference>
<dbReference type="GO" id="GO:0008830">
    <property type="term" value="F:dTDP-4-dehydrorhamnose 3,5-epimerase activity"/>
    <property type="evidence" value="ECO:0000250"/>
    <property type="project" value="UniProtKB"/>
</dbReference>
<dbReference type="GO" id="GO:0006974">
    <property type="term" value="P:DNA damage response"/>
    <property type="evidence" value="ECO:0000315"/>
    <property type="project" value="EcoCyc"/>
</dbReference>
<dbReference type="GO" id="GO:0019305">
    <property type="term" value="P:dTDP-rhamnose biosynthetic process"/>
    <property type="evidence" value="ECO:0000318"/>
    <property type="project" value="GO_Central"/>
</dbReference>
<dbReference type="GO" id="GO:0009103">
    <property type="term" value="P:lipopolysaccharide biosynthetic process"/>
    <property type="evidence" value="ECO:0000250"/>
    <property type="project" value="UniProtKB"/>
</dbReference>
<dbReference type="GO" id="GO:0009243">
    <property type="term" value="P:O antigen biosynthetic process"/>
    <property type="evidence" value="ECO:0007669"/>
    <property type="project" value="UniProtKB-UniPathway"/>
</dbReference>
<dbReference type="GO" id="GO:0000271">
    <property type="term" value="P:polysaccharide biosynthetic process"/>
    <property type="evidence" value="ECO:0000250"/>
    <property type="project" value="UniProtKB"/>
</dbReference>
<dbReference type="GO" id="GO:0046677">
    <property type="term" value="P:response to antibiotic"/>
    <property type="evidence" value="ECO:0000315"/>
    <property type="project" value="EcoCyc"/>
</dbReference>
<dbReference type="GO" id="GO:0009411">
    <property type="term" value="P:response to UV"/>
    <property type="evidence" value="ECO:0000315"/>
    <property type="project" value="EcoCyc"/>
</dbReference>
<dbReference type="CDD" id="cd00438">
    <property type="entry name" value="cupin_RmlC"/>
    <property type="match status" value="1"/>
</dbReference>
<dbReference type="FunFam" id="2.60.120.10:FF:000051">
    <property type="entry name" value="dTDP-4-dehydrorhamnose 3,5-epimerase"/>
    <property type="match status" value="1"/>
</dbReference>
<dbReference type="Gene3D" id="2.60.120.10">
    <property type="entry name" value="Jelly Rolls"/>
    <property type="match status" value="1"/>
</dbReference>
<dbReference type="InterPro" id="IPR000888">
    <property type="entry name" value="RmlC-like"/>
</dbReference>
<dbReference type="InterPro" id="IPR014710">
    <property type="entry name" value="RmlC-like_jellyroll"/>
</dbReference>
<dbReference type="InterPro" id="IPR011051">
    <property type="entry name" value="RmlC_Cupin_sf"/>
</dbReference>
<dbReference type="NCBIfam" id="TIGR01221">
    <property type="entry name" value="rmlC"/>
    <property type="match status" value="1"/>
</dbReference>
<dbReference type="PANTHER" id="PTHR21047">
    <property type="entry name" value="DTDP-6-DEOXY-D-GLUCOSE-3,5 EPIMERASE"/>
    <property type="match status" value="1"/>
</dbReference>
<dbReference type="PANTHER" id="PTHR21047:SF2">
    <property type="entry name" value="THYMIDINE DIPHOSPHO-4-KETO-RHAMNOSE 3,5-EPIMERASE"/>
    <property type="match status" value="1"/>
</dbReference>
<dbReference type="Pfam" id="PF00908">
    <property type="entry name" value="dTDP_sugar_isom"/>
    <property type="match status" value="1"/>
</dbReference>
<dbReference type="SUPFAM" id="SSF51182">
    <property type="entry name" value="RmlC-like cupins"/>
    <property type="match status" value="1"/>
</dbReference>
<keyword id="KW-0119">Carbohydrate metabolism</keyword>
<keyword id="KW-0413">Isomerase</keyword>
<keyword id="KW-0448">Lipopolysaccharide biosynthesis</keyword>
<keyword id="KW-1185">Reference proteome</keyword>
<protein>
    <recommendedName>
        <fullName evidence="1">dTDP-4-dehydrorhamnose 3,5-epimerase</fullName>
        <ecNumber evidence="1">5.1.3.13</ecNumber>
    </recommendedName>
    <alternativeName>
        <fullName evidence="1">Thymidine diphospho-4-keto-rhamnose 3,5-epimerase</fullName>
    </alternativeName>
    <alternativeName>
        <fullName evidence="1">dTDP-4-keto-6-deoxyglucose 3,5-epimerase</fullName>
    </alternativeName>
    <alternativeName>
        <fullName evidence="1">dTDP-6-deoxy-D-xylo-4-hexulose 3,5-epimerase</fullName>
    </alternativeName>
    <alternativeName>
        <fullName evidence="1">dTDP-L-rhamnose synthase</fullName>
    </alternativeName>
</protein>
<organism>
    <name type="scientific">Escherichia coli (strain K12)</name>
    <dbReference type="NCBI Taxonomy" id="83333"/>
    <lineage>
        <taxon>Bacteria</taxon>
        <taxon>Pseudomonadati</taxon>
        <taxon>Pseudomonadota</taxon>
        <taxon>Gammaproteobacteria</taxon>
        <taxon>Enterobacterales</taxon>
        <taxon>Enterobacteriaceae</taxon>
        <taxon>Escherichia</taxon>
    </lineage>
</organism>
<gene>
    <name type="primary">rfbC</name>
    <name type="synonym">rmlC</name>
    <name type="ordered locus">b2038</name>
    <name type="ordered locus">JW2023</name>
</gene>
<name>RMLC_ECOLI</name>
<feature type="chain" id="PRO_0000207978" description="dTDP-4-dehydrorhamnose 3,5-epimerase">
    <location>
        <begin position="1"/>
        <end position="185"/>
    </location>
</feature>
<feature type="active site" description="Proton acceptor" evidence="3">
    <location>
        <position position="62"/>
    </location>
</feature>
<feature type="active site" description="Proton donor" evidence="3">
    <location>
        <position position="132"/>
    </location>
</feature>
<feature type="binding site" evidence="3">
    <location>
        <position position="23"/>
    </location>
    <ligand>
        <name>substrate</name>
    </ligand>
</feature>
<feature type="binding site" evidence="3">
    <location>
        <position position="28"/>
    </location>
    <ligand>
        <name>substrate</name>
    </ligand>
</feature>
<feature type="binding site" evidence="3">
    <location>
        <begin position="47"/>
        <end position="49"/>
    </location>
    <ligand>
        <name>substrate</name>
    </ligand>
</feature>
<feature type="binding site" evidence="3">
    <location>
        <position position="59"/>
    </location>
    <ligand>
        <name>substrate</name>
    </ligand>
</feature>
<feature type="binding site" evidence="3">
    <location>
        <position position="72"/>
    </location>
    <ligand>
        <name>substrate</name>
    </ligand>
</feature>
<feature type="binding site" evidence="3">
    <location>
        <position position="119"/>
    </location>
    <ligand>
        <name>substrate</name>
    </ligand>
</feature>
<feature type="binding site" evidence="3">
    <location>
        <position position="143"/>
    </location>
    <ligand>
        <name>substrate</name>
    </ligand>
</feature>
<feature type="binding site" evidence="3">
    <location>
        <position position="168"/>
    </location>
    <ligand>
        <name>substrate</name>
    </ligand>
</feature>
<feature type="site" description="Participates in a stacking interaction with the thymidine ring of dTDP-4-oxo-6-deoxyglucose" evidence="2">
    <location>
        <position position="138"/>
    </location>
</feature>
<evidence type="ECO:0000250" key="1">
    <source>
        <dbReference type="UniProtKB" id="P26394"/>
    </source>
</evidence>
<evidence type="ECO:0000250" key="2">
    <source>
        <dbReference type="UniProtKB" id="Q5SFD1"/>
    </source>
</evidence>
<evidence type="ECO:0000250" key="3">
    <source>
        <dbReference type="UniProtKB" id="Q9HU21"/>
    </source>
</evidence>
<evidence type="ECO:0000305" key="4"/>
<accession>P37745</accession>
<proteinExistence type="evidence at protein level"/>